<comment type="function">
    <text evidence="2">Antimicrobial peptide with potent activity against Gram-positive bacteria S.aureus (MIC=10 uM) and S.agalactiaea (MIC=15 uM), and Gram-negative bacteria E.coli (MIC=24 uM) and P.aeruginosa (MIC=15 uM), as well as against yeasts Candida albicans (MIC=3.1 uM) and C.glabrata (MIC=25 uM). Also elicits low hemolysis on human erythrocytes (HC(50)=167 uM).</text>
</comment>
<comment type="subcellular location">
    <subcellularLocation>
        <location evidence="5">Secreted</location>
    </subcellularLocation>
    <subcellularLocation>
        <location evidence="4">Target cell membrane</location>
    </subcellularLocation>
</comment>
<comment type="tissue specificity">
    <text evidence="5">Expressed by the venom gland.</text>
</comment>
<comment type="similarity">
    <text evidence="4">Belongs to the non-disulfide-bridged peptide (NDBP) superfamily. Medium-length antimicrobial peptide (group 3) family.</text>
</comment>
<proteinExistence type="evidence at protein level"/>
<reference evidence="6" key="1">
    <citation type="journal article" date="2015" name="Peptides">
        <title>Peptides from the scorpion Vaejovis punctatus with broad antimicrobial activity.</title>
        <authorList>
            <person name="Ramirez-Carreto S."/>
            <person name="Jimenez-Vargas J.M."/>
            <person name="Rivas-Santiago B."/>
            <person name="Corzo G."/>
            <person name="Possani L.D."/>
            <person name="Becerril B."/>
            <person name="Ortiz E."/>
        </authorList>
    </citation>
    <scope>NUCLEOTIDE SEQUENCE [MRNA]</scope>
    <scope>SYNTHESIS OF 24-48</scope>
    <scope>MUTAGENESIS OF 45-SER--SER-47</scope>
    <source>
        <tissue>Venom gland</tissue>
    </source>
</reference>
<feature type="signal peptide" evidence="1">
    <location>
        <begin position="1"/>
        <end position="23"/>
    </location>
</feature>
<feature type="peptide" id="PRO_5006011984" description="VpAmp2.0" evidence="5">
    <location>
        <begin position="24"/>
        <end position="48"/>
    </location>
</feature>
<feature type="propeptide" id="PRO_0000461835" evidence="5">
    <location>
        <begin position="49"/>
        <end position="77"/>
    </location>
</feature>
<feature type="mutagenesis site" description="In VpAmp2.1: Increase in antimicrobial activity against bacteria S.aureus, P.aeruginosa and S.agalactiaea. 3-4-fold increase in antimicrobial activity against yeasts. Slight increase in hemolysis." evidence="2">
    <location>
        <begin position="45"/>
        <end position="47"/>
    </location>
</feature>
<sequence length="77" mass="8942">MQLRKALLVIFVAYLLVTDEAEAFWGFLGKLAMKAVPSLIGGNKSSSKRKREIEDLFDPYQKDLDLQRLDRFFSQFQ</sequence>
<name>NDB2_MESPU</name>
<dbReference type="EMBL" id="KR697561">
    <property type="protein sequence ID" value="ALG64975.1"/>
    <property type="molecule type" value="mRNA"/>
</dbReference>
<dbReference type="GO" id="GO:0005576">
    <property type="term" value="C:extracellular region"/>
    <property type="evidence" value="ECO:0007669"/>
    <property type="project" value="UniProtKB-SubCell"/>
</dbReference>
<dbReference type="GO" id="GO:0016020">
    <property type="term" value="C:membrane"/>
    <property type="evidence" value="ECO:0007669"/>
    <property type="project" value="UniProtKB-KW"/>
</dbReference>
<dbReference type="GO" id="GO:0044218">
    <property type="term" value="C:other organism cell membrane"/>
    <property type="evidence" value="ECO:0007669"/>
    <property type="project" value="UniProtKB-KW"/>
</dbReference>
<dbReference type="GO" id="GO:0042742">
    <property type="term" value="P:defense response to bacterium"/>
    <property type="evidence" value="ECO:0007669"/>
    <property type="project" value="UniProtKB-KW"/>
</dbReference>
<dbReference type="GO" id="GO:0050832">
    <property type="term" value="P:defense response to fungus"/>
    <property type="evidence" value="ECO:0007669"/>
    <property type="project" value="UniProtKB-KW"/>
</dbReference>
<dbReference type="GO" id="GO:0031640">
    <property type="term" value="P:killing of cells of another organism"/>
    <property type="evidence" value="ECO:0007669"/>
    <property type="project" value="UniProtKB-KW"/>
</dbReference>
<protein>
    <recommendedName>
        <fullName evidence="3">VpAmp2.0</fullName>
    </recommendedName>
</protein>
<keyword id="KW-0044">Antibiotic</keyword>
<keyword id="KW-0929">Antimicrobial</keyword>
<keyword id="KW-0165">Cleavage on pair of basic residues</keyword>
<keyword id="KW-0204">Cytolysis</keyword>
<keyword id="KW-0295">Fungicide</keyword>
<keyword id="KW-0472">Membrane</keyword>
<keyword id="KW-0964">Secreted</keyword>
<keyword id="KW-0732">Signal</keyword>
<keyword id="KW-1052">Target cell membrane</keyword>
<keyword id="KW-1053">Target membrane</keyword>
<organism>
    <name type="scientific">Mesomexovis punctatus</name>
    <name type="common">Scorpion</name>
    <name type="synonym">Vaejovis punctatus</name>
    <dbReference type="NCBI Taxonomy" id="1532993"/>
    <lineage>
        <taxon>Eukaryota</taxon>
        <taxon>Metazoa</taxon>
        <taxon>Ecdysozoa</taxon>
        <taxon>Arthropoda</taxon>
        <taxon>Chelicerata</taxon>
        <taxon>Arachnida</taxon>
        <taxon>Scorpiones</taxon>
        <taxon>Iurida</taxon>
        <taxon>Chactoidea</taxon>
        <taxon>Vaejovidae</taxon>
        <taxon>Mesomexovis</taxon>
    </lineage>
</organism>
<evidence type="ECO:0000255" key="1"/>
<evidence type="ECO:0000269" key="2">
    <source>
    </source>
</evidence>
<evidence type="ECO:0000303" key="3">
    <source>
    </source>
</evidence>
<evidence type="ECO:0000305" key="4"/>
<evidence type="ECO:0000305" key="5">
    <source>
    </source>
</evidence>
<evidence type="ECO:0000312" key="6">
    <source>
        <dbReference type="EMBL" id="ALG64975.1"/>
    </source>
</evidence>
<accession>A0A0N7FMT9</accession>